<keyword id="KW-0997">Cell inner membrane</keyword>
<keyword id="KW-1003">Cell membrane</keyword>
<keyword id="KW-0472">Membrane</keyword>
<protein>
    <recommendedName>
        <fullName evidence="1">Putative membrane protein insertion efficiency factor</fullName>
    </recommendedName>
</protein>
<gene>
    <name type="ordered locus">NMCC_0314</name>
</gene>
<comment type="function">
    <text evidence="1">Could be involved in insertion of integral membrane proteins into the membrane.</text>
</comment>
<comment type="subcellular location">
    <subcellularLocation>
        <location evidence="1">Cell inner membrane</location>
        <topology evidence="1">Peripheral membrane protein</topology>
        <orientation evidence="1">Cytoplasmic side</orientation>
    </subcellularLocation>
</comment>
<comment type="similarity">
    <text evidence="1">Belongs to the UPF0161 family.</text>
</comment>
<dbReference type="EMBL" id="CP000381">
    <property type="protein sequence ID" value="ABX72522.1"/>
    <property type="molecule type" value="Genomic_DNA"/>
</dbReference>
<dbReference type="KEGG" id="nmn:NMCC_0314"/>
<dbReference type="HOGENOM" id="CLU_144811_6_1_4"/>
<dbReference type="Proteomes" id="UP000001177">
    <property type="component" value="Chromosome"/>
</dbReference>
<dbReference type="GO" id="GO:0005886">
    <property type="term" value="C:plasma membrane"/>
    <property type="evidence" value="ECO:0007669"/>
    <property type="project" value="UniProtKB-SubCell"/>
</dbReference>
<dbReference type="HAMAP" id="MF_00386">
    <property type="entry name" value="UPF0161_YidD"/>
    <property type="match status" value="1"/>
</dbReference>
<dbReference type="InterPro" id="IPR002696">
    <property type="entry name" value="Membr_insert_effic_factor_YidD"/>
</dbReference>
<dbReference type="NCBIfam" id="TIGR00278">
    <property type="entry name" value="membrane protein insertion efficiency factor YidD"/>
    <property type="match status" value="1"/>
</dbReference>
<dbReference type="PANTHER" id="PTHR33383">
    <property type="entry name" value="MEMBRANE PROTEIN INSERTION EFFICIENCY FACTOR-RELATED"/>
    <property type="match status" value="1"/>
</dbReference>
<dbReference type="PANTHER" id="PTHR33383:SF1">
    <property type="entry name" value="MEMBRANE PROTEIN INSERTION EFFICIENCY FACTOR-RELATED"/>
    <property type="match status" value="1"/>
</dbReference>
<dbReference type="Pfam" id="PF01809">
    <property type="entry name" value="YidD"/>
    <property type="match status" value="1"/>
</dbReference>
<dbReference type="SMART" id="SM01234">
    <property type="entry name" value="Haemolytic"/>
    <property type="match status" value="1"/>
</dbReference>
<organism>
    <name type="scientific">Neisseria meningitidis serogroup C (strain 053442)</name>
    <dbReference type="NCBI Taxonomy" id="374833"/>
    <lineage>
        <taxon>Bacteria</taxon>
        <taxon>Pseudomonadati</taxon>
        <taxon>Pseudomonadota</taxon>
        <taxon>Betaproteobacteria</taxon>
        <taxon>Neisseriales</taxon>
        <taxon>Neisseriaceae</taxon>
        <taxon>Neisseria</taxon>
    </lineage>
</organism>
<sequence>MNFLLSKLLLGLIRFYQYCISPLIPPRCRYTPTCSQYAVEAVKKYGAFKGGRLAIKRIARCHPFGGHGHDPVP</sequence>
<proteinExistence type="inferred from homology"/>
<reference key="1">
    <citation type="journal article" date="2008" name="Genomics">
        <title>Characterization of ST-4821 complex, a unique Neisseria meningitidis clone.</title>
        <authorList>
            <person name="Peng J."/>
            <person name="Yang L."/>
            <person name="Yang F."/>
            <person name="Yang J."/>
            <person name="Yan Y."/>
            <person name="Nie H."/>
            <person name="Zhang X."/>
            <person name="Xiong Z."/>
            <person name="Jiang Y."/>
            <person name="Cheng F."/>
            <person name="Xu X."/>
            <person name="Chen S."/>
            <person name="Sun L."/>
            <person name="Li W."/>
            <person name="Shen Y."/>
            <person name="Shao Z."/>
            <person name="Liang X."/>
            <person name="Xu J."/>
            <person name="Jin Q."/>
        </authorList>
    </citation>
    <scope>NUCLEOTIDE SEQUENCE [LARGE SCALE GENOMIC DNA]</scope>
    <source>
        <strain>053442</strain>
    </source>
</reference>
<accession>A9M153</accession>
<feature type="chain" id="PRO_1000080192" description="Putative membrane protein insertion efficiency factor">
    <location>
        <begin position="1"/>
        <end position="73"/>
    </location>
</feature>
<name>YIDD_NEIM0</name>
<evidence type="ECO:0000255" key="1">
    <source>
        <dbReference type="HAMAP-Rule" id="MF_00386"/>
    </source>
</evidence>